<organism>
    <name type="scientific">Chlamydia trachomatis serovar L2 (strain ATCC VR-902B / DSM 19102 / 434/Bu)</name>
    <dbReference type="NCBI Taxonomy" id="471472"/>
    <lineage>
        <taxon>Bacteria</taxon>
        <taxon>Pseudomonadati</taxon>
        <taxon>Chlamydiota</taxon>
        <taxon>Chlamydiia</taxon>
        <taxon>Chlamydiales</taxon>
        <taxon>Chlamydiaceae</taxon>
        <taxon>Chlamydia/Chlamydophila group</taxon>
        <taxon>Chlamydia</taxon>
    </lineage>
</organism>
<evidence type="ECO:0000255" key="1">
    <source>
        <dbReference type="HAMAP-Rule" id="MF_00337"/>
    </source>
</evidence>
<feature type="chain" id="PRO_1000119910" description="Exodeoxyribonuclease 7 small subunit">
    <location>
        <begin position="1"/>
        <end position="72"/>
    </location>
</feature>
<comment type="function">
    <text evidence="1">Bidirectionally degrades single-stranded DNA into large acid-insoluble oligonucleotides, which are then degraded further into small acid-soluble oligonucleotides.</text>
</comment>
<comment type="catalytic activity">
    <reaction evidence="1">
        <text>Exonucleolytic cleavage in either 5'- to 3'- or 3'- to 5'-direction to yield nucleoside 5'-phosphates.</text>
        <dbReference type="EC" id="3.1.11.6"/>
    </reaction>
</comment>
<comment type="subunit">
    <text evidence="1">Heterooligomer composed of large and small subunits.</text>
</comment>
<comment type="subcellular location">
    <subcellularLocation>
        <location evidence="1">Cytoplasm</location>
    </subcellularLocation>
</comment>
<comment type="similarity">
    <text evidence="1">Belongs to the XseB family.</text>
</comment>
<reference key="1">
    <citation type="journal article" date="2008" name="Genome Res.">
        <title>Chlamydia trachomatis: genome sequence analysis of lymphogranuloma venereum isolates.</title>
        <authorList>
            <person name="Thomson N.R."/>
            <person name="Holden M.T.G."/>
            <person name="Carder C."/>
            <person name="Lennard N."/>
            <person name="Lockey S.J."/>
            <person name="Marsh P."/>
            <person name="Skipp P."/>
            <person name="O'Connor C.D."/>
            <person name="Goodhead I."/>
            <person name="Norbertzcak H."/>
            <person name="Harris B."/>
            <person name="Ormond D."/>
            <person name="Rance R."/>
            <person name="Quail M.A."/>
            <person name="Parkhill J."/>
            <person name="Stephens R.S."/>
            <person name="Clarke I.N."/>
        </authorList>
    </citation>
    <scope>NUCLEOTIDE SEQUENCE [LARGE SCALE GENOMIC DNA]</scope>
    <source>
        <strain>ATCC VR-902B / DSM 19102 / 434/Bu</strain>
    </source>
</reference>
<gene>
    <name evidence="1" type="primary">xseB</name>
    <name type="ordered locus">CTL0583.1</name>
    <name type="ORF">CTL0583A</name>
</gene>
<name>EX7S_CHLT2</name>
<keyword id="KW-0963">Cytoplasm</keyword>
<keyword id="KW-0269">Exonuclease</keyword>
<keyword id="KW-0378">Hydrolase</keyword>
<keyword id="KW-0540">Nuclease</keyword>
<sequence>MTKKAKNVEKVPFEDAMKRLEEIIDLMNQPTTSLEASLALYEEADQLMRICESRIQEVEARIKQLSDQRSES</sequence>
<protein>
    <recommendedName>
        <fullName evidence="1">Exodeoxyribonuclease 7 small subunit</fullName>
        <ecNumber evidence="1">3.1.11.6</ecNumber>
    </recommendedName>
    <alternativeName>
        <fullName evidence="1">Exodeoxyribonuclease VII small subunit</fullName>
        <shortName evidence="1">Exonuclease VII small subunit</shortName>
    </alternativeName>
</protein>
<dbReference type="EC" id="3.1.11.6" evidence="1"/>
<dbReference type="EMBL" id="AM884176">
    <property type="protein sequence ID" value="CAP04023.1"/>
    <property type="molecule type" value="Genomic_DNA"/>
</dbReference>
<dbReference type="RefSeq" id="WP_009872566.1">
    <property type="nucleotide sequence ID" value="NC_010287.1"/>
</dbReference>
<dbReference type="RefSeq" id="YP_001654658.1">
    <property type="nucleotide sequence ID" value="NC_010287.1"/>
</dbReference>
<dbReference type="SMR" id="B0B7P7"/>
<dbReference type="KEGG" id="ctb:CTL0583A"/>
<dbReference type="PATRIC" id="fig|471472.4.peg.628"/>
<dbReference type="HOGENOM" id="CLU_145918_3_4_0"/>
<dbReference type="Proteomes" id="UP001154402">
    <property type="component" value="Chromosome"/>
</dbReference>
<dbReference type="GO" id="GO:0005829">
    <property type="term" value="C:cytosol"/>
    <property type="evidence" value="ECO:0007669"/>
    <property type="project" value="TreeGrafter"/>
</dbReference>
<dbReference type="GO" id="GO:0009318">
    <property type="term" value="C:exodeoxyribonuclease VII complex"/>
    <property type="evidence" value="ECO:0007669"/>
    <property type="project" value="InterPro"/>
</dbReference>
<dbReference type="GO" id="GO:0008855">
    <property type="term" value="F:exodeoxyribonuclease VII activity"/>
    <property type="evidence" value="ECO:0007669"/>
    <property type="project" value="UniProtKB-UniRule"/>
</dbReference>
<dbReference type="GO" id="GO:0006308">
    <property type="term" value="P:DNA catabolic process"/>
    <property type="evidence" value="ECO:0007669"/>
    <property type="project" value="UniProtKB-UniRule"/>
</dbReference>
<dbReference type="FunFam" id="1.10.287.1040:FF:000013">
    <property type="entry name" value="Exodeoxyribonuclease 7 small subunit"/>
    <property type="match status" value="1"/>
</dbReference>
<dbReference type="Gene3D" id="1.10.287.1040">
    <property type="entry name" value="Exonuclease VII, small subunit"/>
    <property type="match status" value="1"/>
</dbReference>
<dbReference type="HAMAP" id="MF_00337">
    <property type="entry name" value="Exonuc_7_S"/>
    <property type="match status" value="1"/>
</dbReference>
<dbReference type="InterPro" id="IPR003761">
    <property type="entry name" value="Exonuc_VII_S"/>
</dbReference>
<dbReference type="InterPro" id="IPR037004">
    <property type="entry name" value="Exonuc_VII_ssu_sf"/>
</dbReference>
<dbReference type="NCBIfam" id="NF002140">
    <property type="entry name" value="PRK00977.1-4"/>
    <property type="match status" value="1"/>
</dbReference>
<dbReference type="NCBIfam" id="TIGR01280">
    <property type="entry name" value="xseB"/>
    <property type="match status" value="1"/>
</dbReference>
<dbReference type="PANTHER" id="PTHR34137">
    <property type="entry name" value="EXODEOXYRIBONUCLEASE 7 SMALL SUBUNIT"/>
    <property type="match status" value="1"/>
</dbReference>
<dbReference type="PANTHER" id="PTHR34137:SF1">
    <property type="entry name" value="EXODEOXYRIBONUCLEASE 7 SMALL SUBUNIT"/>
    <property type="match status" value="1"/>
</dbReference>
<dbReference type="Pfam" id="PF02609">
    <property type="entry name" value="Exonuc_VII_S"/>
    <property type="match status" value="1"/>
</dbReference>
<dbReference type="PIRSF" id="PIRSF006488">
    <property type="entry name" value="Exonuc_VII_S"/>
    <property type="match status" value="1"/>
</dbReference>
<dbReference type="SUPFAM" id="SSF116842">
    <property type="entry name" value="XseB-like"/>
    <property type="match status" value="1"/>
</dbReference>
<proteinExistence type="inferred from homology"/>
<accession>B0B7P7</accession>